<keyword id="KW-0067">ATP-binding</keyword>
<keyword id="KW-0150">Chloroplast</keyword>
<keyword id="KW-0418">Kinase</keyword>
<keyword id="KW-0547">Nucleotide-binding</keyword>
<keyword id="KW-0934">Plastid</keyword>
<keyword id="KW-1185">Reference proteome</keyword>
<keyword id="KW-0808">Transferase</keyword>
<keyword id="KW-0809">Transit peptide</keyword>
<name>FN3KR_ORYSI</name>
<accession>A2XBT1</accession>
<sequence>MANVALLSAASPSTSSAAPRLRHVARRRPSRRSACPRSAASRLSIMAALGEDPIRQWILTEGKATKITGVSSIGGGCINSAQCYKTDAGSFFVKTNGRIGPSMFEGEALGLKAMYDTNSIRVPLPYKVGSLPTGGSFIIMEFIEFGCSRGDQSALGRKLAEMHKAAKSDKGYGFYVDNTIGSTPQINTWTADWIEFYSKHRLGFQLELITQRFGDSAIYDKGQRLIENMHPLFEGAVMEPCLLHGDLWSGNISSDTDGEPVILDPACYYGHNEAEFGMSWCAGFGGEFYSSYFEVMPKQPGFEKRRDLYLLYHYLNHYNLFGSGYRSSAMSIIDDYLRMLKA</sequence>
<proteinExistence type="inferred from homology"/>
<organism>
    <name type="scientific">Oryza sativa subsp. indica</name>
    <name type="common">Rice</name>
    <dbReference type="NCBI Taxonomy" id="39946"/>
    <lineage>
        <taxon>Eukaryota</taxon>
        <taxon>Viridiplantae</taxon>
        <taxon>Streptophyta</taxon>
        <taxon>Embryophyta</taxon>
        <taxon>Tracheophyta</taxon>
        <taxon>Spermatophyta</taxon>
        <taxon>Magnoliopsida</taxon>
        <taxon>Liliopsida</taxon>
        <taxon>Poales</taxon>
        <taxon>Poaceae</taxon>
        <taxon>BOP clade</taxon>
        <taxon>Oryzoideae</taxon>
        <taxon>Oryzeae</taxon>
        <taxon>Oryzinae</taxon>
        <taxon>Oryza</taxon>
        <taxon>Oryza sativa</taxon>
    </lineage>
</organism>
<feature type="transit peptide" description="Chloroplast" evidence="4">
    <location>
        <begin position="1"/>
        <end position="46"/>
    </location>
</feature>
<feature type="chain" id="PRO_0000413958" description="Protein-ribulosamine 3-kinase, chloroplastic">
    <location>
        <begin position="47"/>
        <end position="342"/>
    </location>
</feature>
<feature type="active site" description="Proton acceptor" evidence="1">
    <location>
        <position position="246"/>
    </location>
</feature>
<feature type="binding site" evidence="2">
    <location>
        <begin position="141"/>
        <end position="143"/>
    </location>
    <ligand>
        <name>ATP</name>
        <dbReference type="ChEBI" id="CHEBI:30616"/>
    </ligand>
</feature>
<reference key="1">
    <citation type="journal article" date="2005" name="PLoS Biol.">
        <title>The genomes of Oryza sativa: a history of duplications.</title>
        <authorList>
            <person name="Yu J."/>
            <person name="Wang J."/>
            <person name="Lin W."/>
            <person name="Li S."/>
            <person name="Li H."/>
            <person name="Zhou J."/>
            <person name="Ni P."/>
            <person name="Dong W."/>
            <person name="Hu S."/>
            <person name="Zeng C."/>
            <person name="Zhang J."/>
            <person name="Zhang Y."/>
            <person name="Li R."/>
            <person name="Xu Z."/>
            <person name="Li S."/>
            <person name="Li X."/>
            <person name="Zheng H."/>
            <person name="Cong L."/>
            <person name="Lin L."/>
            <person name="Yin J."/>
            <person name="Geng J."/>
            <person name="Li G."/>
            <person name="Shi J."/>
            <person name="Liu J."/>
            <person name="Lv H."/>
            <person name="Li J."/>
            <person name="Wang J."/>
            <person name="Deng Y."/>
            <person name="Ran L."/>
            <person name="Shi X."/>
            <person name="Wang X."/>
            <person name="Wu Q."/>
            <person name="Li C."/>
            <person name="Ren X."/>
            <person name="Wang J."/>
            <person name="Wang X."/>
            <person name="Li D."/>
            <person name="Liu D."/>
            <person name="Zhang X."/>
            <person name="Ji Z."/>
            <person name="Zhao W."/>
            <person name="Sun Y."/>
            <person name="Zhang Z."/>
            <person name="Bao J."/>
            <person name="Han Y."/>
            <person name="Dong L."/>
            <person name="Ji J."/>
            <person name="Chen P."/>
            <person name="Wu S."/>
            <person name="Liu J."/>
            <person name="Xiao Y."/>
            <person name="Bu D."/>
            <person name="Tan J."/>
            <person name="Yang L."/>
            <person name="Ye C."/>
            <person name="Zhang J."/>
            <person name="Xu J."/>
            <person name="Zhou Y."/>
            <person name="Yu Y."/>
            <person name="Zhang B."/>
            <person name="Zhuang S."/>
            <person name="Wei H."/>
            <person name="Liu B."/>
            <person name="Lei M."/>
            <person name="Yu H."/>
            <person name="Li Y."/>
            <person name="Xu H."/>
            <person name="Wei S."/>
            <person name="He X."/>
            <person name="Fang L."/>
            <person name="Zhang Z."/>
            <person name="Zhang Y."/>
            <person name="Huang X."/>
            <person name="Su Z."/>
            <person name="Tong W."/>
            <person name="Li J."/>
            <person name="Tong Z."/>
            <person name="Li S."/>
            <person name="Ye J."/>
            <person name="Wang L."/>
            <person name="Fang L."/>
            <person name="Lei T."/>
            <person name="Chen C.-S."/>
            <person name="Chen H.-C."/>
            <person name="Xu Z."/>
            <person name="Li H."/>
            <person name="Huang H."/>
            <person name="Zhang F."/>
            <person name="Xu H."/>
            <person name="Li N."/>
            <person name="Zhao C."/>
            <person name="Li S."/>
            <person name="Dong L."/>
            <person name="Huang Y."/>
            <person name="Li L."/>
            <person name="Xi Y."/>
            <person name="Qi Q."/>
            <person name="Li W."/>
            <person name="Zhang B."/>
            <person name="Hu W."/>
            <person name="Zhang Y."/>
            <person name="Tian X."/>
            <person name="Jiao Y."/>
            <person name="Liang X."/>
            <person name="Jin J."/>
            <person name="Gao L."/>
            <person name="Zheng W."/>
            <person name="Hao B."/>
            <person name="Liu S.-M."/>
            <person name="Wang W."/>
            <person name="Yuan L."/>
            <person name="Cao M."/>
            <person name="McDermott J."/>
            <person name="Samudrala R."/>
            <person name="Wang J."/>
            <person name="Wong G.K.-S."/>
            <person name="Yang H."/>
        </authorList>
    </citation>
    <scope>NUCLEOTIDE SEQUENCE [LARGE SCALE GENOMIC DNA]</scope>
    <source>
        <strain>cv. 93-11</strain>
    </source>
</reference>
<evidence type="ECO:0000250" key="1">
    <source>
        <dbReference type="UniProtKB" id="P9WI99"/>
    </source>
</evidence>
<evidence type="ECO:0000250" key="2">
    <source>
        <dbReference type="UniProtKB" id="Q9HA64"/>
    </source>
</evidence>
<evidence type="ECO:0000250" key="3">
    <source>
        <dbReference type="UniProtKB" id="Q9LEW8"/>
    </source>
</evidence>
<evidence type="ECO:0000255" key="4"/>
<evidence type="ECO:0000305" key="5"/>
<dbReference type="EC" id="2.7.1.172" evidence="3"/>
<dbReference type="EMBL" id="CM000128">
    <property type="protein sequence ID" value="EAY88291.1"/>
    <property type="molecule type" value="Genomic_DNA"/>
</dbReference>
<dbReference type="SMR" id="A2XBT1"/>
<dbReference type="STRING" id="39946.A2XBT1"/>
<dbReference type="EnsemblPlants" id="BGIOSGA011722-TA">
    <property type="protein sequence ID" value="BGIOSGA011722-PA"/>
    <property type="gene ID" value="BGIOSGA011722"/>
</dbReference>
<dbReference type="EnsemblPlants" id="OsIR64_03g0001440.01">
    <property type="protein sequence ID" value="OsIR64_03g0001440.01"/>
    <property type="gene ID" value="OsIR64_03g0001440"/>
</dbReference>
<dbReference type="EnsemblPlants" id="OsKYG_03g0001520.01">
    <property type="protein sequence ID" value="OsKYG_03g0001520.01"/>
    <property type="gene ID" value="OsKYG_03g0001520"/>
</dbReference>
<dbReference type="EnsemblPlants" id="OsLaMu_03g0001500.01">
    <property type="protein sequence ID" value="OsLaMu_03g0001500.01"/>
    <property type="gene ID" value="OsLaMu_03g0001500"/>
</dbReference>
<dbReference type="EnsemblPlants" id="OsLima_03g0001500.02">
    <property type="protein sequence ID" value="OsLima_03g0001500.02"/>
    <property type="gene ID" value="OsLima_03g0001500"/>
</dbReference>
<dbReference type="EnsemblPlants" id="OsLiXu_03g0001490.01">
    <property type="protein sequence ID" value="OsLiXu_03g0001490.01"/>
    <property type="gene ID" value="OsLiXu_03g0001490"/>
</dbReference>
<dbReference type="EnsemblPlants" id="OsMH63_03G001450_03">
    <property type="protein sequence ID" value="OsMH63_03G001450_03"/>
    <property type="gene ID" value="OsMH63_03G001450"/>
</dbReference>
<dbReference type="EnsemblPlants" id="OsPr106_03g0001470.01">
    <property type="protein sequence ID" value="OsPr106_03g0001470.01"/>
    <property type="gene ID" value="OsPr106_03g0001470"/>
</dbReference>
<dbReference type="EnsemblPlants" id="OsZS97_03G001450_02">
    <property type="protein sequence ID" value="OsZS97_03G001450_02"/>
    <property type="gene ID" value="OsZS97_03G001450"/>
</dbReference>
<dbReference type="Gramene" id="BGIOSGA011722-TA">
    <property type="protein sequence ID" value="BGIOSGA011722-PA"/>
    <property type="gene ID" value="BGIOSGA011722"/>
</dbReference>
<dbReference type="Gramene" id="OsIR64_03g0001440.01">
    <property type="protein sequence ID" value="OsIR64_03g0001440.01"/>
    <property type="gene ID" value="OsIR64_03g0001440"/>
</dbReference>
<dbReference type="Gramene" id="OsKYG_03g0001520.01">
    <property type="protein sequence ID" value="OsKYG_03g0001520.01"/>
    <property type="gene ID" value="OsKYG_03g0001520"/>
</dbReference>
<dbReference type="Gramene" id="OsLaMu_03g0001500.01">
    <property type="protein sequence ID" value="OsLaMu_03g0001500.01"/>
    <property type="gene ID" value="OsLaMu_03g0001500"/>
</dbReference>
<dbReference type="Gramene" id="OsLima_03g0001500.02">
    <property type="protein sequence ID" value="OsLima_03g0001500.02"/>
    <property type="gene ID" value="OsLima_03g0001500"/>
</dbReference>
<dbReference type="Gramene" id="OsLiXu_03g0001490.01">
    <property type="protein sequence ID" value="OsLiXu_03g0001490.01"/>
    <property type="gene ID" value="OsLiXu_03g0001490"/>
</dbReference>
<dbReference type="Gramene" id="OsMH63_03G001450_03">
    <property type="protein sequence ID" value="OsMH63_03G001450_03"/>
    <property type="gene ID" value="OsMH63_03G001450"/>
</dbReference>
<dbReference type="Gramene" id="OsPr106_03g0001470.01">
    <property type="protein sequence ID" value="OsPr106_03g0001470.01"/>
    <property type="gene ID" value="OsPr106_03g0001470"/>
</dbReference>
<dbReference type="Gramene" id="OsZS97_03G001450_02">
    <property type="protein sequence ID" value="OsZS97_03G001450_02"/>
    <property type="gene ID" value="OsZS97_03G001450"/>
</dbReference>
<dbReference type="HOGENOM" id="CLU_036517_0_1_1"/>
<dbReference type="OMA" id="RECDIAM"/>
<dbReference type="Proteomes" id="UP000007015">
    <property type="component" value="Chromosome 3"/>
</dbReference>
<dbReference type="GO" id="GO:0009507">
    <property type="term" value="C:chloroplast"/>
    <property type="evidence" value="ECO:0007669"/>
    <property type="project" value="UniProtKB-SubCell"/>
</dbReference>
<dbReference type="GO" id="GO:0005524">
    <property type="term" value="F:ATP binding"/>
    <property type="evidence" value="ECO:0007669"/>
    <property type="project" value="UniProtKB-KW"/>
</dbReference>
<dbReference type="GO" id="GO:0016301">
    <property type="term" value="F:kinase activity"/>
    <property type="evidence" value="ECO:0007669"/>
    <property type="project" value="UniProtKB-KW"/>
</dbReference>
<dbReference type="GO" id="GO:0102193">
    <property type="term" value="F:protein-ribulosamine 3-kinase activity"/>
    <property type="evidence" value="ECO:0007669"/>
    <property type="project" value="UniProtKB-EC"/>
</dbReference>
<dbReference type="FunFam" id="3.30.200.20:FF:000264">
    <property type="entry name" value="Protein-ribulosamine 3-kinase, chloroplastic"/>
    <property type="match status" value="1"/>
</dbReference>
<dbReference type="FunFam" id="3.90.1200.10:FF:000006">
    <property type="entry name" value="Protein-ribulosamine 3-kinase, chloroplastic"/>
    <property type="match status" value="1"/>
</dbReference>
<dbReference type="Gene3D" id="3.90.1200.10">
    <property type="match status" value="1"/>
</dbReference>
<dbReference type="Gene3D" id="3.30.200.20">
    <property type="entry name" value="Phosphorylase Kinase, domain 1"/>
    <property type="match status" value="1"/>
</dbReference>
<dbReference type="InterPro" id="IPR016477">
    <property type="entry name" value="Fructo-/Ketosamine-3-kinase"/>
</dbReference>
<dbReference type="InterPro" id="IPR011009">
    <property type="entry name" value="Kinase-like_dom_sf"/>
</dbReference>
<dbReference type="PANTHER" id="PTHR12149">
    <property type="entry name" value="FRUCTOSAMINE 3 KINASE-RELATED PROTEIN"/>
    <property type="match status" value="1"/>
</dbReference>
<dbReference type="PANTHER" id="PTHR12149:SF8">
    <property type="entry name" value="PROTEIN-RIBULOSAMINE 3-KINASE"/>
    <property type="match status" value="1"/>
</dbReference>
<dbReference type="Pfam" id="PF03881">
    <property type="entry name" value="Fructosamin_kin"/>
    <property type="match status" value="1"/>
</dbReference>
<dbReference type="PIRSF" id="PIRSF006221">
    <property type="entry name" value="Ketosamine-3-kinase"/>
    <property type="match status" value="1"/>
</dbReference>
<dbReference type="SUPFAM" id="SSF56112">
    <property type="entry name" value="Protein kinase-like (PK-like)"/>
    <property type="match status" value="1"/>
</dbReference>
<protein>
    <recommendedName>
        <fullName evidence="5">Protein-ribulosamine 3-kinase, chloroplastic</fullName>
        <ecNumber evidence="3">2.7.1.172</ecNumber>
    </recommendedName>
    <alternativeName>
        <fullName evidence="3">Fructosamine 3-kinase-related protein</fullName>
    </alternativeName>
</protein>
<comment type="function">
    <text evidence="3">Initiates a process leading to the deglycation of proteins. Phosphorylates low-molecular-mass and protein-bound erythrulosamines and ribulosamines, but not fructosamines or psicosamines, on the third carbon of the sugar moiety. Protein-bound erythrulosamine 3-phosphates and ribulosamine 3-phosphates are unstable and decompose under physiological conditions.</text>
</comment>
<comment type="catalytic activity">
    <reaction evidence="3">
        <text>N(6)-D-ribulosyl-L-lysyl-[protein] + ATP = N(6)-(3-O-phospho-D-ribulosyl)-L-lysyl-[protein] + ADP + H(+)</text>
        <dbReference type="Rhea" id="RHEA:48432"/>
        <dbReference type="Rhea" id="RHEA-COMP:12103"/>
        <dbReference type="Rhea" id="RHEA-COMP:12104"/>
        <dbReference type="ChEBI" id="CHEBI:15378"/>
        <dbReference type="ChEBI" id="CHEBI:30616"/>
        <dbReference type="ChEBI" id="CHEBI:90418"/>
        <dbReference type="ChEBI" id="CHEBI:90420"/>
        <dbReference type="ChEBI" id="CHEBI:456216"/>
        <dbReference type="EC" id="2.7.1.172"/>
    </reaction>
    <physiologicalReaction direction="left-to-right" evidence="3">
        <dbReference type="Rhea" id="RHEA:48433"/>
    </physiologicalReaction>
</comment>
<comment type="catalytic activity">
    <reaction evidence="3">
        <text>N(6)-(D-erythrulosyl)-L-lysyl-[protein] + ATP = N(6)-(3-O-phospho-D-erythrulosyl)-L-lysyl-[protein] + ADP + H(+)</text>
        <dbReference type="Rhea" id="RHEA:61396"/>
        <dbReference type="Rhea" id="RHEA-COMP:15794"/>
        <dbReference type="Rhea" id="RHEA-COMP:15799"/>
        <dbReference type="ChEBI" id="CHEBI:15378"/>
        <dbReference type="ChEBI" id="CHEBI:30616"/>
        <dbReference type="ChEBI" id="CHEBI:144587"/>
        <dbReference type="ChEBI" id="CHEBI:144624"/>
        <dbReference type="ChEBI" id="CHEBI:456216"/>
    </reaction>
    <physiologicalReaction direction="left-to-right" evidence="3">
        <dbReference type="Rhea" id="RHEA:61397"/>
    </physiologicalReaction>
</comment>
<comment type="subcellular location">
    <subcellularLocation>
        <location evidence="5">Plastid</location>
        <location evidence="5">Chloroplast</location>
    </subcellularLocation>
</comment>
<comment type="similarity">
    <text evidence="5">Belongs to the fructosamine kinase family.</text>
</comment>
<gene>
    <name type="ORF">OsI_09747</name>
</gene>